<name>HCAC_PHOLL</name>
<protein>
    <recommendedName>
        <fullName evidence="1">3-phenylpropionate/cinnamic acid dioxygenase ferredoxin subunit</fullName>
    </recommendedName>
</protein>
<organism>
    <name type="scientific">Photorhabdus laumondii subsp. laumondii (strain DSM 15139 / CIP 105565 / TT01)</name>
    <name type="common">Photorhabdus luminescens subsp. laumondii</name>
    <dbReference type="NCBI Taxonomy" id="243265"/>
    <lineage>
        <taxon>Bacteria</taxon>
        <taxon>Pseudomonadati</taxon>
        <taxon>Pseudomonadota</taxon>
        <taxon>Gammaproteobacteria</taxon>
        <taxon>Enterobacterales</taxon>
        <taxon>Morganellaceae</taxon>
        <taxon>Photorhabdus</taxon>
    </lineage>
</organism>
<accession>Q7N4V8</accession>
<proteinExistence type="inferred from homology"/>
<keyword id="KW-0001">2Fe-2S</keyword>
<keyword id="KW-0058">Aromatic hydrocarbons catabolism</keyword>
<keyword id="KW-0249">Electron transport</keyword>
<keyword id="KW-0408">Iron</keyword>
<keyword id="KW-0411">Iron-sulfur</keyword>
<keyword id="KW-0479">Metal-binding</keyword>
<keyword id="KW-1185">Reference proteome</keyword>
<keyword id="KW-0813">Transport</keyword>
<sequence length="105" mass="11536">MSQLFVCTVEELPDGGARKVEYTPDIALFHYDGEFFAVDDRCSHGNASISEGYLEDNATVECPLHTASFCLRTGKALCLPATDPLKTYPVVVKDGNIYITVSEEQ</sequence>
<comment type="function">
    <text evidence="1">Part of the multicomponent 3-phenylpropionate dioxygenase, that converts 3-phenylpropionic acid (PP) and cinnamic acid (CI) into 3-phenylpropionate-dihydrodiol (PP-dihydrodiol) and cinnamic acid-dihydrodiol (CI-dihydrodiol), respectively. This protein seems to be a 2Fe-2S ferredoxin.</text>
</comment>
<comment type="cofactor">
    <cofactor evidence="1">
        <name>[2Fe-2S] cluster</name>
        <dbReference type="ChEBI" id="CHEBI:190135"/>
    </cofactor>
    <text evidence="1">Binds 1 [2Fe-2S] cluster per subunit.</text>
</comment>
<comment type="pathway">
    <text evidence="1">Aromatic compound metabolism; 3-phenylpropanoate degradation.</text>
</comment>
<comment type="subunit">
    <text evidence="1">This dioxygenase system consists of four proteins: the two subunits of the hydroxylase component (HcaE and HcaF), a ferredoxin (HcaC) and a ferredoxin reductase (HcaD).</text>
</comment>
<comment type="similarity">
    <text evidence="1">Belongs to the bacterial ring-hydroxylating dioxygenase ferredoxin component family.</text>
</comment>
<feature type="chain" id="PRO_0000333720" description="3-phenylpropionate/cinnamic acid dioxygenase ferredoxin subunit">
    <location>
        <begin position="1"/>
        <end position="105"/>
    </location>
</feature>
<feature type="domain" description="Rieske" evidence="1">
    <location>
        <begin position="4"/>
        <end position="99"/>
    </location>
</feature>
<feature type="binding site" evidence="1">
    <location>
        <position position="42"/>
    </location>
    <ligand>
        <name>[2Fe-2S] cluster</name>
        <dbReference type="ChEBI" id="CHEBI:190135"/>
    </ligand>
</feature>
<feature type="binding site" evidence="1">
    <location>
        <position position="44"/>
    </location>
    <ligand>
        <name>[2Fe-2S] cluster</name>
        <dbReference type="ChEBI" id="CHEBI:190135"/>
    </ligand>
</feature>
<feature type="binding site" evidence="1">
    <location>
        <position position="62"/>
    </location>
    <ligand>
        <name>[2Fe-2S] cluster</name>
        <dbReference type="ChEBI" id="CHEBI:190135"/>
    </ligand>
</feature>
<feature type="binding site" evidence="1">
    <location>
        <position position="65"/>
    </location>
    <ligand>
        <name>[2Fe-2S] cluster</name>
        <dbReference type="ChEBI" id="CHEBI:190135"/>
    </ligand>
</feature>
<dbReference type="EMBL" id="BX571866">
    <property type="protein sequence ID" value="CAE14499.1"/>
    <property type="molecule type" value="Genomic_DNA"/>
</dbReference>
<dbReference type="RefSeq" id="WP_011146458.1">
    <property type="nucleotide sequence ID" value="NC_005126.1"/>
</dbReference>
<dbReference type="SMR" id="Q7N4V8"/>
<dbReference type="STRING" id="243265.plu2206"/>
<dbReference type="GeneID" id="48848482"/>
<dbReference type="KEGG" id="plu:plu2206"/>
<dbReference type="eggNOG" id="COG2146">
    <property type="taxonomic scope" value="Bacteria"/>
</dbReference>
<dbReference type="HOGENOM" id="CLU_055690_5_0_6"/>
<dbReference type="OrthoDB" id="9800167at2"/>
<dbReference type="UniPathway" id="UPA00714"/>
<dbReference type="Proteomes" id="UP000002514">
    <property type="component" value="Chromosome"/>
</dbReference>
<dbReference type="GO" id="GO:0051537">
    <property type="term" value="F:2 iron, 2 sulfur cluster binding"/>
    <property type="evidence" value="ECO:0007669"/>
    <property type="project" value="UniProtKB-KW"/>
</dbReference>
<dbReference type="GO" id="GO:0008695">
    <property type="term" value="F:3-phenylpropionate dioxygenase activity"/>
    <property type="evidence" value="ECO:0007669"/>
    <property type="project" value="UniProtKB-UniRule"/>
</dbReference>
<dbReference type="GO" id="GO:0046872">
    <property type="term" value="F:metal ion binding"/>
    <property type="evidence" value="ECO:0007669"/>
    <property type="project" value="UniProtKB-KW"/>
</dbReference>
<dbReference type="GO" id="GO:0019380">
    <property type="term" value="P:3-phenylpropionate catabolic process"/>
    <property type="evidence" value="ECO:0007669"/>
    <property type="project" value="UniProtKB-UniRule"/>
</dbReference>
<dbReference type="CDD" id="cd03528">
    <property type="entry name" value="Rieske_RO_ferredoxin"/>
    <property type="match status" value="1"/>
</dbReference>
<dbReference type="Gene3D" id="2.102.10.10">
    <property type="entry name" value="Rieske [2Fe-2S] iron-sulphur domain"/>
    <property type="match status" value="1"/>
</dbReference>
<dbReference type="HAMAP" id="MF_01650">
    <property type="entry name" value="HcaC"/>
    <property type="match status" value="1"/>
</dbReference>
<dbReference type="InterPro" id="IPR023739">
    <property type="entry name" value="HcaC"/>
</dbReference>
<dbReference type="InterPro" id="IPR017941">
    <property type="entry name" value="Rieske_2Fe-2S"/>
</dbReference>
<dbReference type="InterPro" id="IPR036922">
    <property type="entry name" value="Rieske_2Fe-2S_sf"/>
</dbReference>
<dbReference type="InterPro" id="IPR053387">
    <property type="entry name" value="Ring-hydroxylating_fd"/>
</dbReference>
<dbReference type="NCBIfam" id="NF042948">
    <property type="entry name" value="3PPDioc_HcaC"/>
    <property type="match status" value="1"/>
</dbReference>
<dbReference type="NCBIfam" id="NF007422">
    <property type="entry name" value="PRK09965.1"/>
    <property type="match status" value="1"/>
</dbReference>
<dbReference type="PANTHER" id="PTHR21496:SF23">
    <property type="entry name" value="3-PHENYLPROPIONATE_CINNAMIC ACID DIOXYGENASE FERREDOXIN SUBUNIT"/>
    <property type="match status" value="1"/>
</dbReference>
<dbReference type="PANTHER" id="PTHR21496">
    <property type="entry name" value="FERREDOXIN-RELATED"/>
    <property type="match status" value="1"/>
</dbReference>
<dbReference type="Pfam" id="PF00355">
    <property type="entry name" value="Rieske"/>
    <property type="match status" value="1"/>
</dbReference>
<dbReference type="SUPFAM" id="SSF50022">
    <property type="entry name" value="ISP domain"/>
    <property type="match status" value="1"/>
</dbReference>
<dbReference type="PROSITE" id="PS51296">
    <property type="entry name" value="RIESKE"/>
    <property type="match status" value="1"/>
</dbReference>
<reference key="1">
    <citation type="journal article" date="2003" name="Nat. Biotechnol.">
        <title>The genome sequence of the entomopathogenic bacterium Photorhabdus luminescens.</title>
        <authorList>
            <person name="Duchaud E."/>
            <person name="Rusniok C."/>
            <person name="Frangeul L."/>
            <person name="Buchrieser C."/>
            <person name="Givaudan A."/>
            <person name="Taourit S."/>
            <person name="Bocs S."/>
            <person name="Boursaux-Eude C."/>
            <person name="Chandler M."/>
            <person name="Charles J.-F."/>
            <person name="Dassa E."/>
            <person name="Derose R."/>
            <person name="Derzelle S."/>
            <person name="Freyssinet G."/>
            <person name="Gaudriault S."/>
            <person name="Medigue C."/>
            <person name="Lanois A."/>
            <person name="Powell K."/>
            <person name="Siguier P."/>
            <person name="Vincent R."/>
            <person name="Wingate V."/>
            <person name="Zouine M."/>
            <person name="Glaser P."/>
            <person name="Boemare N."/>
            <person name="Danchin A."/>
            <person name="Kunst F."/>
        </authorList>
    </citation>
    <scope>NUCLEOTIDE SEQUENCE [LARGE SCALE GENOMIC DNA]</scope>
    <source>
        <strain>DSM 15139 / CIP 105565 / TT01</strain>
    </source>
</reference>
<evidence type="ECO:0000255" key="1">
    <source>
        <dbReference type="HAMAP-Rule" id="MF_01650"/>
    </source>
</evidence>
<gene>
    <name evidence="1" type="primary">hcaC</name>
    <name type="ordered locus">plu2206</name>
</gene>